<name>F16A1_LEPCP</name>
<reference key="1">
    <citation type="submission" date="2008-03" db="EMBL/GenBank/DDBJ databases">
        <title>Complete sequence of Leptothrix cholodnii SP-6.</title>
        <authorList>
            <consortium name="US DOE Joint Genome Institute"/>
            <person name="Copeland A."/>
            <person name="Lucas S."/>
            <person name="Lapidus A."/>
            <person name="Glavina del Rio T."/>
            <person name="Dalin E."/>
            <person name="Tice H."/>
            <person name="Bruce D."/>
            <person name="Goodwin L."/>
            <person name="Pitluck S."/>
            <person name="Chertkov O."/>
            <person name="Brettin T."/>
            <person name="Detter J.C."/>
            <person name="Han C."/>
            <person name="Kuske C.R."/>
            <person name="Schmutz J."/>
            <person name="Larimer F."/>
            <person name="Land M."/>
            <person name="Hauser L."/>
            <person name="Kyrpides N."/>
            <person name="Lykidis A."/>
            <person name="Emerson D."/>
            <person name="Richardson P."/>
        </authorList>
    </citation>
    <scope>NUCLEOTIDE SEQUENCE [LARGE SCALE GENOMIC DNA]</scope>
    <source>
        <strain>ATCC 51168 / LMG 8142 / SP-6</strain>
    </source>
</reference>
<protein>
    <recommendedName>
        <fullName evidence="1">Fructose-1,6-bisphosphatase class 1 1</fullName>
        <shortName evidence="1">FBPase class 1 1</shortName>
        <ecNumber evidence="1">3.1.3.11</ecNumber>
    </recommendedName>
    <alternativeName>
        <fullName evidence="1">D-fructose-1,6-bisphosphate 1-phosphohydrolase class 1 1</fullName>
    </alternativeName>
</protein>
<proteinExistence type="inferred from homology"/>
<dbReference type="EC" id="3.1.3.11" evidence="1"/>
<dbReference type="EMBL" id="CP001013">
    <property type="protein sequence ID" value="ACB34030.1"/>
    <property type="molecule type" value="Genomic_DNA"/>
</dbReference>
<dbReference type="RefSeq" id="WP_012346791.1">
    <property type="nucleotide sequence ID" value="NC_010524.1"/>
</dbReference>
<dbReference type="SMR" id="B1XZ11"/>
<dbReference type="STRING" id="395495.Lcho_1763"/>
<dbReference type="KEGG" id="lch:Lcho_1763"/>
<dbReference type="eggNOG" id="COG0158">
    <property type="taxonomic scope" value="Bacteria"/>
</dbReference>
<dbReference type="HOGENOM" id="CLU_039977_0_0_4"/>
<dbReference type="OrthoDB" id="9806756at2"/>
<dbReference type="UniPathway" id="UPA00138"/>
<dbReference type="Proteomes" id="UP000001693">
    <property type="component" value="Chromosome"/>
</dbReference>
<dbReference type="GO" id="GO:0005829">
    <property type="term" value="C:cytosol"/>
    <property type="evidence" value="ECO:0007669"/>
    <property type="project" value="TreeGrafter"/>
</dbReference>
<dbReference type="GO" id="GO:0042132">
    <property type="term" value="F:fructose 1,6-bisphosphate 1-phosphatase activity"/>
    <property type="evidence" value="ECO:0007669"/>
    <property type="project" value="UniProtKB-UniRule"/>
</dbReference>
<dbReference type="GO" id="GO:0000287">
    <property type="term" value="F:magnesium ion binding"/>
    <property type="evidence" value="ECO:0007669"/>
    <property type="project" value="UniProtKB-UniRule"/>
</dbReference>
<dbReference type="GO" id="GO:0030388">
    <property type="term" value="P:fructose 1,6-bisphosphate metabolic process"/>
    <property type="evidence" value="ECO:0007669"/>
    <property type="project" value="TreeGrafter"/>
</dbReference>
<dbReference type="GO" id="GO:0006002">
    <property type="term" value="P:fructose 6-phosphate metabolic process"/>
    <property type="evidence" value="ECO:0007669"/>
    <property type="project" value="TreeGrafter"/>
</dbReference>
<dbReference type="GO" id="GO:0006000">
    <property type="term" value="P:fructose metabolic process"/>
    <property type="evidence" value="ECO:0007669"/>
    <property type="project" value="TreeGrafter"/>
</dbReference>
<dbReference type="GO" id="GO:0006094">
    <property type="term" value="P:gluconeogenesis"/>
    <property type="evidence" value="ECO:0007669"/>
    <property type="project" value="UniProtKB-UniRule"/>
</dbReference>
<dbReference type="GO" id="GO:0005986">
    <property type="term" value="P:sucrose biosynthetic process"/>
    <property type="evidence" value="ECO:0007669"/>
    <property type="project" value="TreeGrafter"/>
</dbReference>
<dbReference type="CDD" id="cd00354">
    <property type="entry name" value="FBPase"/>
    <property type="match status" value="1"/>
</dbReference>
<dbReference type="FunFam" id="3.30.540.10:FF:000006">
    <property type="entry name" value="Fructose-1,6-bisphosphatase class 1"/>
    <property type="match status" value="1"/>
</dbReference>
<dbReference type="FunFam" id="3.40.190.80:FF:000011">
    <property type="entry name" value="Fructose-1,6-bisphosphatase class 1"/>
    <property type="match status" value="1"/>
</dbReference>
<dbReference type="Gene3D" id="3.40.190.80">
    <property type="match status" value="1"/>
</dbReference>
<dbReference type="Gene3D" id="3.30.540.10">
    <property type="entry name" value="Fructose-1,6-Bisphosphatase, subunit A, domain 1"/>
    <property type="match status" value="1"/>
</dbReference>
<dbReference type="HAMAP" id="MF_01855">
    <property type="entry name" value="FBPase_class1"/>
    <property type="match status" value="1"/>
</dbReference>
<dbReference type="InterPro" id="IPR044015">
    <property type="entry name" value="FBPase_C_dom"/>
</dbReference>
<dbReference type="InterPro" id="IPR000146">
    <property type="entry name" value="FBPase_class-1"/>
</dbReference>
<dbReference type="InterPro" id="IPR033391">
    <property type="entry name" value="FBPase_N"/>
</dbReference>
<dbReference type="InterPro" id="IPR028343">
    <property type="entry name" value="FBPtase"/>
</dbReference>
<dbReference type="NCBIfam" id="NF006778">
    <property type="entry name" value="PRK09293.1-1"/>
    <property type="match status" value="1"/>
</dbReference>
<dbReference type="NCBIfam" id="NF006779">
    <property type="entry name" value="PRK09293.1-3"/>
    <property type="match status" value="1"/>
</dbReference>
<dbReference type="NCBIfam" id="NF006780">
    <property type="entry name" value="PRK09293.1-4"/>
    <property type="match status" value="1"/>
</dbReference>
<dbReference type="PANTHER" id="PTHR11556">
    <property type="entry name" value="FRUCTOSE-1,6-BISPHOSPHATASE-RELATED"/>
    <property type="match status" value="1"/>
</dbReference>
<dbReference type="PANTHER" id="PTHR11556:SF35">
    <property type="entry name" value="SEDOHEPTULOSE-1,7-BISPHOSPHATASE, CHLOROPLASTIC"/>
    <property type="match status" value="1"/>
</dbReference>
<dbReference type="Pfam" id="PF00316">
    <property type="entry name" value="FBPase"/>
    <property type="match status" value="1"/>
</dbReference>
<dbReference type="Pfam" id="PF18913">
    <property type="entry name" value="FBPase_C"/>
    <property type="match status" value="1"/>
</dbReference>
<dbReference type="PIRSF" id="PIRSF500210">
    <property type="entry name" value="FBPtase"/>
    <property type="match status" value="1"/>
</dbReference>
<dbReference type="PIRSF" id="PIRSF000904">
    <property type="entry name" value="FBPtase_SBPase"/>
    <property type="match status" value="1"/>
</dbReference>
<dbReference type="PRINTS" id="PR00115">
    <property type="entry name" value="F16BPHPHTASE"/>
</dbReference>
<dbReference type="SUPFAM" id="SSF56655">
    <property type="entry name" value="Carbohydrate phosphatase"/>
    <property type="match status" value="1"/>
</dbReference>
<comment type="catalytic activity">
    <reaction evidence="1">
        <text>beta-D-fructose 1,6-bisphosphate + H2O = beta-D-fructose 6-phosphate + phosphate</text>
        <dbReference type="Rhea" id="RHEA:11064"/>
        <dbReference type="ChEBI" id="CHEBI:15377"/>
        <dbReference type="ChEBI" id="CHEBI:32966"/>
        <dbReference type="ChEBI" id="CHEBI:43474"/>
        <dbReference type="ChEBI" id="CHEBI:57634"/>
        <dbReference type="EC" id="3.1.3.11"/>
    </reaction>
</comment>
<comment type="cofactor">
    <cofactor evidence="1">
        <name>Mg(2+)</name>
        <dbReference type="ChEBI" id="CHEBI:18420"/>
    </cofactor>
    <text evidence="1">Binds 2 magnesium ions per subunit.</text>
</comment>
<comment type="pathway">
    <text evidence="1">Carbohydrate biosynthesis; gluconeogenesis.</text>
</comment>
<comment type="subunit">
    <text evidence="1">Homotetramer.</text>
</comment>
<comment type="subcellular location">
    <subcellularLocation>
        <location evidence="1">Cytoplasm</location>
    </subcellularLocation>
</comment>
<comment type="similarity">
    <text evidence="1">Belongs to the FBPase class 1 family.</text>
</comment>
<gene>
    <name evidence="1" type="primary">fbp1</name>
    <name type="ordered locus">Lcho_1763</name>
</gene>
<organism>
    <name type="scientific">Leptothrix cholodnii (strain ATCC 51168 / LMG 8142 / SP-6)</name>
    <name type="common">Leptothrix discophora (strain SP-6)</name>
    <dbReference type="NCBI Taxonomy" id="395495"/>
    <lineage>
        <taxon>Bacteria</taxon>
        <taxon>Pseudomonadati</taxon>
        <taxon>Pseudomonadota</taxon>
        <taxon>Betaproteobacteria</taxon>
        <taxon>Burkholderiales</taxon>
        <taxon>Sphaerotilaceae</taxon>
        <taxon>Leptothrix</taxon>
    </lineage>
</organism>
<feature type="chain" id="PRO_0000364590" description="Fructose-1,6-bisphosphatase class 1 1">
    <location>
        <begin position="1"/>
        <end position="341"/>
    </location>
</feature>
<feature type="binding site" evidence="1">
    <location>
        <position position="92"/>
    </location>
    <ligand>
        <name>Mg(2+)</name>
        <dbReference type="ChEBI" id="CHEBI:18420"/>
        <label>1</label>
    </ligand>
</feature>
<feature type="binding site" evidence="1">
    <location>
        <position position="114"/>
    </location>
    <ligand>
        <name>Mg(2+)</name>
        <dbReference type="ChEBI" id="CHEBI:18420"/>
        <label>1</label>
    </ligand>
</feature>
<feature type="binding site" evidence="1">
    <location>
        <position position="114"/>
    </location>
    <ligand>
        <name>Mg(2+)</name>
        <dbReference type="ChEBI" id="CHEBI:18420"/>
        <label>2</label>
    </ligand>
</feature>
<feature type="binding site" evidence="1">
    <location>
        <position position="116"/>
    </location>
    <ligand>
        <name>Mg(2+)</name>
        <dbReference type="ChEBI" id="CHEBI:18420"/>
        <label>1</label>
    </ligand>
</feature>
<feature type="binding site" evidence="1">
    <location>
        <begin position="117"/>
        <end position="120"/>
    </location>
    <ligand>
        <name>substrate</name>
    </ligand>
</feature>
<feature type="binding site" evidence="1">
    <location>
        <position position="117"/>
    </location>
    <ligand>
        <name>Mg(2+)</name>
        <dbReference type="ChEBI" id="CHEBI:18420"/>
        <label>2</label>
    </ligand>
</feature>
<feature type="binding site" evidence="1">
    <location>
        <position position="209"/>
    </location>
    <ligand>
        <name>substrate</name>
    </ligand>
</feature>
<feature type="binding site" evidence="1">
    <location>
        <position position="275"/>
    </location>
    <ligand>
        <name>substrate</name>
    </ligand>
</feature>
<feature type="binding site" evidence="1">
    <location>
        <position position="281"/>
    </location>
    <ligand>
        <name>Mg(2+)</name>
        <dbReference type="ChEBI" id="CHEBI:18420"/>
        <label>2</label>
    </ligand>
</feature>
<evidence type="ECO:0000255" key="1">
    <source>
        <dbReference type="HAMAP-Rule" id="MF_01855"/>
    </source>
</evidence>
<sequence length="341" mass="37866">MSKRISLTQFLVEQQRQHGRIPAQLRLLIEVVARACKRIAISVNKGALGEVLGSAGSENVQGEVQKKLDIISNEVLIEANEWGGHLAAMASEEMDSIHVVPNRYPQGEYMLLFDPLDGSSNIDVNVSIGTIFSVLRKVGHQHGVSEEDFLQPGKFQAAAGYCVYGPQTTLVLTVGDGVAVFTLDRETGSFVLTQSNLQIPADTHEFAINASNHRHWAPPMKRYIDECLAGREGPRGKDFNMRWVGSMVADVHRILTRGGIFLYPWDQREPDKPGKLRLMYEANPMAFLVEQAGGAATNGEQRIMDLMPGKLHERVSVMMGSKNEVERVSQYHREHREAAGH</sequence>
<keyword id="KW-0119">Carbohydrate metabolism</keyword>
<keyword id="KW-0963">Cytoplasm</keyword>
<keyword id="KW-0378">Hydrolase</keyword>
<keyword id="KW-0460">Magnesium</keyword>
<keyword id="KW-0479">Metal-binding</keyword>
<keyword id="KW-1185">Reference proteome</keyword>
<accession>B1XZ11</accession>